<reference key="1">
    <citation type="journal article" date="2015" name="J. Biotechnol.">
        <title>Draft genome sequence of Talaromyces islandicus ('Penicillium islandicum') WF-38-12, a neglected mold with significant biotechnological potential.</title>
        <authorList>
            <person name="Schafhauser T."/>
            <person name="Wibberg D."/>
            <person name="Rueckert C."/>
            <person name="Winkler A."/>
            <person name="Flor L."/>
            <person name="van Pee K.-H."/>
            <person name="Fewer D.P."/>
            <person name="Sivonen K."/>
            <person name="Jahn L."/>
            <person name="Ludwig-Mueller J."/>
            <person name="Caradec T."/>
            <person name="Jacques P."/>
            <person name="Huijbers M.M.E."/>
            <person name="van Berkel W.J.H."/>
            <person name="Weber T."/>
            <person name="Wohlleben W."/>
            <person name="Kalinowski J."/>
        </authorList>
    </citation>
    <scope>NUCLEOTIDE SEQUENCE [LARGE SCALE GENOMIC DNA]</scope>
    <source>
        <strain>ATCC 26535 / WF-38-12</strain>
    </source>
</reference>
<reference key="2">
    <citation type="journal article" date="2016" name="Environ. Microbiol.">
        <title>The cyclochlorotine mycotoxin is produced by the nonribosomal peptide synthetase CctN in Talaromyces islandicus ('Penicillium islandicum').</title>
        <authorList>
            <person name="Schafhauser T."/>
            <person name="Kirchner N."/>
            <person name="Kulik A."/>
            <person name="Huijbers M.M."/>
            <person name="Flor L."/>
            <person name="Caradec T."/>
            <person name="Fewer D.P."/>
            <person name="Gross H."/>
            <person name="Jacques P."/>
            <person name="Jahn L."/>
            <person name="Jokela J."/>
            <person name="Leclere V."/>
            <person name="Ludwig-Mueller J."/>
            <person name="Sivonen K."/>
            <person name="van Berkel W.J."/>
            <person name="Weber T."/>
            <person name="Wohlleben W."/>
            <person name="van Pee K.H."/>
        </authorList>
    </citation>
    <scope>FUNCTION</scope>
</reference>
<reference key="3">
    <citation type="journal article" date="2021" name="Org. Lett.">
        <title>Biosynthesis of cyclochlorotine: identification of the genes involved in oxidative transformations and intramolecular O,N-transacylation.</title>
        <authorList>
            <person name="Jiang Y."/>
            <person name="Ozaki T."/>
            <person name="Liu C."/>
            <person name="Igarashi Y."/>
            <person name="Ye Y."/>
            <person name="Tang S."/>
            <person name="Ye T."/>
            <person name="Maruyama J.I."/>
            <person name="Minami A."/>
            <person name="Oikawa H."/>
        </authorList>
    </citation>
    <scope>FUNCTION</scope>
    <scope>DISRUPTION PHENOTYPE</scope>
    <scope>CATALYTIC ACTIVITY</scope>
    <scope>PATHWAY</scope>
</reference>
<feature type="chain" id="PRO_0000438668" description="Hydroxylase cctR">
    <location>
        <begin position="1"/>
        <end position="261"/>
    </location>
</feature>
<feature type="transmembrane region" description="Helical" evidence="2">
    <location>
        <begin position="38"/>
        <end position="58"/>
    </location>
</feature>
<feature type="short sequence motif" description="HXXHC 1" evidence="1">
    <location>
        <begin position="146"/>
        <end position="150"/>
    </location>
</feature>
<feature type="short sequence motif" description="HXXHC 2" evidence="1">
    <location>
        <begin position="176"/>
        <end position="180"/>
    </location>
</feature>
<feature type="glycosylation site" description="N-linked (GlcNAc...) asparagine" evidence="3">
    <location>
        <position position="95"/>
    </location>
</feature>
<sequence>MEEELEPLNRPTLDPDESYAEEKIYGSSHREPNSRIRVFVSLLILSNTISFGLLGWIGLSSTQASLAIPEDYAIPPRIATQYKRFWWTTEYSSKNQSQQDELWNSIVWTYGMIGVDHEWSKSQHWPDTMSLPQDKTKAVYLLQAYHEIHCLGVLRRLMSQSLAGVDFSESEHTHAHIAHCFDSLLQSTICRADSTPLYTFGGTIVGSGQQHECRDWNALRDYATQNSACYTEESGFGGQCSDGDGLVPATPMETQQDGFWL</sequence>
<dbReference type="EC" id="1.-.-.-" evidence="5"/>
<dbReference type="EMBL" id="CVMT01000002">
    <property type="protein sequence ID" value="CRG85576.1"/>
    <property type="molecule type" value="Genomic_DNA"/>
</dbReference>
<dbReference type="STRING" id="28573.A0A0U1LR74"/>
<dbReference type="GlyCosmos" id="A0A0U1LR74">
    <property type="glycosylation" value="1 site, No reported glycans"/>
</dbReference>
<dbReference type="OMA" id="HTHAHIA"/>
<dbReference type="OrthoDB" id="4227068at2759"/>
<dbReference type="Proteomes" id="UP000054383">
    <property type="component" value="Unassembled WGS sequence"/>
</dbReference>
<dbReference type="GO" id="GO:0016020">
    <property type="term" value="C:membrane"/>
    <property type="evidence" value="ECO:0007669"/>
    <property type="project" value="UniProtKB-SubCell"/>
</dbReference>
<dbReference type="GO" id="GO:0016491">
    <property type="term" value="F:oxidoreductase activity"/>
    <property type="evidence" value="ECO:0007669"/>
    <property type="project" value="UniProtKB-KW"/>
</dbReference>
<dbReference type="GO" id="GO:0043386">
    <property type="term" value="P:mycotoxin biosynthetic process"/>
    <property type="evidence" value="ECO:0007669"/>
    <property type="project" value="InterPro"/>
</dbReference>
<dbReference type="InterPro" id="IPR021765">
    <property type="entry name" value="UstYa-like"/>
</dbReference>
<dbReference type="PANTHER" id="PTHR33365:SF6">
    <property type="entry name" value="OXIDASE USTYA"/>
    <property type="match status" value="1"/>
</dbReference>
<dbReference type="PANTHER" id="PTHR33365">
    <property type="entry name" value="YALI0B05434P"/>
    <property type="match status" value="1"/>
</dbReference>
<dbReference type="Pfam" id="PF11807">
    <property type="entry name" value="UstYa"/>
    <property type="match status" value="1"/>
</dbReference>
<accession>A0A0U1LR74</accession>
<evidence type="ECO:0000250" key="1">
    <source>
        <dbReference type="UniProtKB" id="B8NM67"/>
    </source>
</evidence>
<evidence type="ECO:0000255" key="2"/>
<evidence type="ECO:0000255" key="3">
    <source>
        <dbReference type="PROSITE-ProRule" id="PRU00498"/>
    </source>
</evidence>
<evidence type="ECO:0000269" key="4">
    <source>
    </source>
</evidence>
<evidence type="ECO:0000269" key="5">
    <source>
    </source>
</evidence>
<evidence type="ECO:0000303" key="6">
    <source>
    </source>
</evidence>
<evidence type="ECO:0000303" key="7">
    <source>
    </source>
</evidence>
<evidence type="ECO:0000305" key="8"/>
<evidence type="ECO:0000305" key="9">
    <source>
    </source>
</evidence>
<organism>
    <name type="scientific">Talaromyces islandicus</name>
    <name type="common">Penicillium islandicum</name>
    <dbReference type="NCBI Taxonomy" id="28573"/>
    <lineage>
        <taxon>Eukaryota</taxon>
        <taxon>Fungi</taxon>
        <taxon>Dikarya</taxon>
        <taxon>Ascomycota</taxon>
        <taxon>Pezizomycotina</taxon>
        <taxon>Eurotiomycetes</taxon>
        <taxon>Eurotiomycetidae</taxon>
        <taxon>Eurotiales</taxon>
        <taxon>Trichocomaceae</taxon>
        <taxon>Talaromyces</taxon>
        <taxon>Talaromyces sect. Islandici</taxon>
    </lineage>
</organism>
<comment type="function">
    <text evidence="4 5 9">Hydroxylase; part of the gene cluster that mediates the biosynthesis of the mycotoxin cyclochlorotine, a hepatotoxic and carcinogenic cyclic chlorinated pentapeptide (PubMed:26954535, PubMed:33736433). Within the pathway, cctR performs the last step by hydroxylating cyclochlorotine to yield hydroxycyclochlorotine (PubMed:33736433). The NRPS cctN initially catalyzes the condensation of L-serine (Ser), Pro, L-2-aminobutyrate (2Abu), Ser, and beta-Phe in this order to produce isocyclotine. After the dichlorination of Pro2 catalyzed by cctP2 to produce isocyclochlorotine, the cctO-mediated transacylation of isocyclochlorotine can furnish cyclochlorotine. The subsequent hydroxylation of cyclochlorotine by cctR yields hydroxycyclochlorotine as the final product. CctP1 probably acts as a phenylalanine aminomutase and provides the uncommon building block beta-Phe. Furthermore, 2Abu can be synthesized from threonine by one of the threonine dehydratases and transaminases localized outside of the cluster. The functions of the remaining proteins encoded by the cluster, cctM and cctT, have not been identified yet (Probable) (PubMed:33736433).</text>
</comment>
<comment type="pathway">
    <text evidence="5">Mycotoxin biosynthesis.</text>
</comment>
<comment type="subcellular location">
    <subcellularLocation>
        <location evidence="2">Membrane</location>
        <topology evidence="2">Single-pass membrane protein</topology>
    </subcellularLocation>
</comment>
<comment type="domain">
    <text evidence="1">The 2 HXXHC motifs are conserved in ustYa family proteins and might form active sites.</text>
</comment>
<comment type="disruption phenotype">
    <text evidence="5">Abolishes the production of hydroxycyclochlorotine.</text>
</comment>
<comment type="similarity">
    <text evidence="8">Belongs to the ustYa family.</text>
</comment>
<gene>
    <name evidence="6" type="primary">cctR</name>
    <name type="ORF">PISL3812_02623</name>
</gene>
<keyword id="KW-0325">Glycoprotein</keyword>
<keyword id="KW-0472">Membrane</keyword>
<keyword id="KW-0560">Oxidoreductase</keyword>
<keyword id="KW-1185">Reference proteome</keyword>
<keyword id="KW-0812">Transmembrane</keyword>
<keyword id="KW-1133">Transmembrane helix</keyword>
<proteinExistence type="evidence at protein level"/>
<name>CCTR_TALIS</name>
<protein>
    <recommendedName>
        <fullName evidence="7">Hydroxylase cctR</fullName>
        <ecNumber evidence="5">1.-.-.-</ecNumber>
    </recommendedName>
    <alternativeName>
        <fullName evidence="6">Cyclochlorotine biosynthesis protein R</fullName>
    </alternativeName>
</protein>